<organism>
    <name type="scientific">Gallus gallus</name>
    <name type="common">Chicken</name>
    <dbReference type="NCBI Taxonomy" id="9031"/>
    <lineage>
        <taxon>Eukaryota</taxon>
        <taxon>Metazoa</taxon>
        <taxon>Chordata</taxon>
        <taxon>Craniata</taxon>
        <taxon>Vertebrata</taxon>
        <taxon>Euteleostomi</taxon>
        <taxon>Archelosauria</taxon>
        <taxon>Archosauria</taxon>
        <taxon>Dinosauria</taxon>
        <taxon>Saurischia</taxon>
        <taxon>Theropoda</taxon>
        <taxon>Coelurosauria</taxon>
        <taxon>Aves</taxon>
        <taxon>Neognathae</taxon>
        <taxon>Galloanserae</taxon>
        <taxon>Galliformes</taxon>
        <taxon>Phasianidae</taxon>
        <taxon>Phasianinae</taxon>
        <taxon>Gallus</taxon>
    </lineage>
</organism>
<keyword id="KW-0963">Cytoplasm</keyword>
<keyword id="KW-0521">NADP</keyword>
<keyword id="KW-0560">Oxidoreductase</keyword>
<keyword id="KW-1185">Reference proteome</keyword>
<name>MAOX_CHICK</name>
<dbReference type="EC" id="1.1.1.40" evidence="1"/>
<dbReference type="EMBL" id="U49693">
    <property type="protein sequence ID" value="AAA92721.1"/>
    <property type="molecule type" value="Genomic_DNA"/>
</dbReference>
<dbReference type="FunCoup" id="Q92060">
    <property type="interactions" value="1949"/>
</dbReference>
<dbReference type="eggNOG" id="KOG1257">
    <property type="taxonomic scope" value="Eukaryota"/>
</dbReference>
<dbReference type="InParanoid" id="Q92060"/>
<dbReference type="OrthoDB" id="5365701at2759"/>
<dbReference type="Proteomes" id="UP000000539">
    <property type="component" value="Unassembled WGS sequence"/>
</dbReference>
<dbReference type="GO" id="GO:0005737">
    <property type="term" value="C:cytoplasm"/>
    <property type="evidence" value="ECO:0007669"/>
    <property type="project" value="UniProtKB-SubCell"/>
</dbReference>
<dbReference type="GO" id="GO:0000287">
    <property type="term" value="F:magnesium ion binding"/>
    <property type="evidence" value="ECO:0000250"/>
    <property type="project" value="UniProtKB"/>
</dbReference>
<dbReference type="GO" id="GO:0004473">
    <property type="term" value="F:malate dehydrogenase (decarboxylating) (NADP+) activity"/>
    <property type="evidence" value="ECO:0000250"/>
    <property type="project" value="UniProtKB"/>
</dbReference>
<dbReference type="GO" id="GO:0030145">
    <property type="term" value="F:manganese ion binding"/>
    <property type="evidence" value="ECO:0000250"/>
    <property type="project" value="UniProtKB"/>
</dbReference>
<dbReference type="GO" id="GO:0008948">
    <property type="term" value="F:oxaloacetate decarboxylase activity"/>
    <property type="evidence" value="ECO:0000250"/>
    <property type="project" value="UniProtKB"/>
</dbReference>
<dbReference type="GO" id="GO:0051289">
    <property type="term" value="P:protein homotetramerization"/>
    <property type="evidence" value="ECO:0000250"/>
    <property type="project" value="UniProtKB"/>
</dbReference>
<comment type="function">
    <text evidence="1">Catalyzes the oxidative decarboxylation of (S)-malate in the presence of NADP (+) and divalent metal ions, and decarboxylation of oxaloacetate.</text>
</comment>
<comment type="catalytic activity">
    <reaction evidence="1">
        <text>(S)-malate + NADP(+) = pyruvate + CO2 + NADPH</text>
        <dbReference type="Rhea" id="RHEA:18253"/>
        <dbReference type="ChEBI" id="CHEBI:15361"/>
        <dbReference type="ChEBI" id="CHEBI:15589"/>
        <dbReference type="ChEBI" id="CHEBI:16526"/>
        <dbReference type="ChEBI" id="CHEBI:57783"/>
        <dbReference type="ChEBI" id="CHEBI:58349"/>
        <dbReference type="EC" id="1.1.1.40"/>
    </reaction>
    <physiologicalReaction direction="left-to-right" evidence="1">
        <dbReference type="Rhea" id="RHEA:18254"/>
    </physiologicalReaction>
    <physiologicalReaction direction="right-to-left" evidence="1">
        <dbReference type="Rhea" id="RHEA:18255"/>
    </physiologicalReaction>
</comment>
<comment type="catalytic activity">
    <reaction evidence="1">
        <text>oxaloacetate + H(+) = pyruvate + CO2</text>
        <dbReference type="Rhea" id="RHEA:15641"/>
        <dbReference type="ChEBI" id="CHEBI:15361"/>
        <dbReference type="ChEBI" id="CHEBI:15378"/>
        <dbReference type="ChEBI" id="CHEBI:16452"/>
        <dbReference type="ChEBI" id="CHEBI:16526"/>
        <dbReference type="EC" id="1.1.1.40"/>
    </reaction>
    <physiologicalReaction direction="left-to-right" evidence="1">
        <dbReference type="Rhea" id="RHEA:15642"/>
    </physiologicalReaction>
</comment>
<comment type="cofactor">
    <cofactor evidence="1">
        <name>Mg(2+)</name>
        <dbReference type="ChEBI" id="CHEBI:18420"/>
    </cofactor>
    <cofactor evidence="1">
        <name>Mn(2+)</name>
        <dbReference type="ChEBI" id="CHEBI:29035"/>
    </cofactor>
    <text evidence="1">Divalent metal cations. Prefers magnesium or manganese.</text>
</comment>
<comment type="subunit">
    <text evidence="1">Homotetramer.</text>
</comment>
<comment type="subcellular location">
    <subcellularLocation>
        <location evidence="1">Cytoplasm</location>
    </subcellularLocation>
</comment>
<comment type="similarity">
    <text evidence="2">Belongs to the malic enzymes family.</text>
</comment>
<gene>
    <name type="primary">ME1</name>
</gene>
<evidence type="ECO:0000250" key="1">
    <source>
        <dbReference type="UniProtKB" id="P48163"/>
    </source>
</evidence>
<evidence type="ECO:0000305" key="2"/>
<proteinExistence type="inferred from homology"/>
<reference key="1">
    <citation type="journal article" date="1996" name="Arch. Biochem. Biophys.">
        <title>The chicken malic enzyme gene: structural organization and identification of triiodothyronine response elements in the 5'-flanking DNA.</title>
        <authorList>
            <person name="Hodnett D.W."/>
            <person name="Fantozzi D.A."/>
            <person name="Thurmond D.C."/>
            <person name="Klautky S.A."/>
            <person name="Macphee K.G."/>
            <person name="Estrem S.T."/>
            <person name="Xu G."/>
            <person name="Goodridge A.G."/>
        </authorList>
    </citation>
    <scope>NUCLEOTIDE SEQUENCE [GENOMIC DNA]</scope>
</reference>
<feature type="chain" id="PRO_0000160197" description="NADP-dependent malic enzyme">
    <location>
        <begin position="1"/>
        <end position="15" status="greater than"/>
    </location>
</feature>
<feature type="non-terminal residue">
    <location>
        <position position="15"/>
    </location>
</feature>
<accession>Q92060</accession>
<sequence length="15" mass="1842">MKRGYEVVRDPHLNK</sequence>
<protein>
    <recommendedName>
        <fullName>NADP-dependent malic enzyme</fullName>
        <shortName>NADP-ME</shortName>
        <ecNumber evidence="1">1.1.1.40</ecNumber>
    </recommendedName>
</protein>